<reference key="1">
    <citation type="submission" date="2009-01" db="EMBL/GenBank/DDBJ databases">
        <title>Complete sequence of chromosome of Methylobacterium nodulans ORS 2060.</title>
        <authorList>
            <consortium name="US DOE Joint Genome Institute"/>
            <person name="Lucas S."/>
            <person name="Copeland A."/>
            <person name="Lapidus A."/>
            <person name="Glavina del Rio T."/>
            <person name="Dalin E."/>
            <person name="Tice H."/>
            <person name="Bruce D."/>
            <person name="Goodwin L."/>
            <person name="Pitluck S."/>
            <person name="Sims D."/>
            <person name="Brettin T."/>
            <person name="Detter J.C."/>
            <person name="Han C."/>
            <person name="Larimer F."/>
            <person name="Land M."/>
            <person name="Hauser L."/>
            <person name="Kyrpides N."/>
            <person name="Ivanova N."/>
            <person name="Marx C.J."/>
            <person name="Richardson P."/>
        </authorList>
    </citation>
    <scope>NUCLEOTIDE SEQUENCE [LARGE SCALE GENOMIC DNA]</scope>
    <source>
        <strain>LMG 21967 / CNCM I-2342 / ORS 2060</strain>
    </source>
</reference>
<accession>B8IP71</accession>
<evidence type="ECO:0000255" key="1">
    <source>
        <dbReference type="HAMAP-Rule" id="MF_00741"/>
    </source>
</evidence>
<protein>
    <recommendedName>
        <fullName evidence="1">Phosphoribosylformylglycinamidine cyclo-ligase</fullName>
        <ecNumber evidence="1">6.3.3.1</ecNumber>
    </recommendedName>
    <alternativeName>
        <fullName evidence="1">AIR synthase</fullName>
    </alternativeName>
    <alternativeName>
        <fullName evidence="1">AIRS</fullName>
    </alternativeName>
    <alternativeName>
        <fullName evidence="1">Phosphoribosyl-aminoimidazole synthetase</fullName>
    </alternativeName>
</protein>
<name>PUR5_METNO</name>
<sequence>MTGERGLTYAEAGVDIDAGNAMVEAIKPLVRSTRRPGADAEIGGFGGLFDLKAAGFKDPILVAANDGVGTKVKIAIETGRHDTIGIDLVAMCVNDIVVQGAEPLFFLDYYATGKLVPGVGADIVRGIAEGCRQAGCALIGGETAEMPGLYDGSDYDLAGFSVGAAERGALLPRPGIAPGDLVLGLPSSGVHSNGFSLVRRIVAASGLGWDAPAPFAPGRSLGEALLTPTRIYVRPLLAALKATGAGAIKALAHITGGGFPDNLPRVLPEGVGIALDLDEIAVPPVFGWLARTGKVAEAEMLRTFNCGIGMVVVVAADRIASVEAALREAGEAPVRLGRITPRGEAPVTFSGSLAL</sequence>
<gene>
    <name evidence="1" type="primary">purM</name>
    <name type="ordered locus">Mnod_5547</name>
</gene>
<feature type="chain" id="PRO_1000148286" description="Phosphoribosylformylglycinamidine cyclo-ligase">
    <location>
        <begin position="1"/>
        <end position="355"/>
    </location>
</feature>
<dbReference type="EC" id="6.3.3.1" evidence="1"/>
<dbReference type="EMBL" id="CP001349">
    <property type="protein sequence ID" value="ACL60389.1"/>
    <property type="molecule type" value="Genomic_DNA"/>
</dbReference>
<dbReference type="RefSeq" id="WP_015931995.1">
    <property type="nucleotide sequence ID" value="NC_011894.1"/>
</dbReference>
<dbReference type="SMR" id="B8IP71"/>
<dbReference type="STRING" id="460265.Mnod_5547"/>
<dbReference type="KEGG" id="mno:Mnod_5547"/>
<dbReference type="eggNOG" id="COG0150">
    <property type="taxonomic scope" value="Bacteria"/>
</dbReference>
<dbReference type="HOGENOM" id="CLU_047116_0_0_5"/>
<dbReference type="OrthoDB" id="9777881at2"/>
<dbReference type="UniPathway" id="UPA00074">
    <property type="reaction ID" value="UER00129"/>
</dbReference>
<dbReference type="Proteomes" id="UP000008207">
    <property type="component" value="Chromosome"/>
</dbReference>
<dbReference type="GO" id="GO:0005829">
    <property type="term" value="C:cytosol"/>
    <property type="evidence" value="ECO:0007669"/>
    <property type="project" value="TreeGrafter"/>
</dbReference>
<dbReference type="GO" id="GO:0005524">
    <property type="term" value="F:ATP binding"/>
    <property type="evidence" value="ECO:0007669"/>
    <property type="project" value="UniProtKB-KW"/>
</dbReference>
<dbReference type="GO" id="GO:0004637">
    <property type="term" value="F:phosphoribosylamine-glycine ligase activity"/>
    <property type="evidence" value="ECO:0007669"/>
    <property type="project" value="TreeGrafter"/>
</dbReference>
<dbReference type="GO" id="GO:0004641">
    <property type="term" value="F:phosphoribosylformylglycinamidine cyclo-ligase activity"/>
    <property type="evidence" value="ECO:0007669"/>
    <property type="project" value="UniProtKB-UniRule"/>
</dbReference>
<dbReference type="GO" id="GO:0006189">
    <property type="term" value="P:'de novo' IMP biosynthetic process"/>
    <property type="evidence" value="ECO:0007669"/>
    <property type="project" value="UniProtKB-UniRule"/>
</dbReference>
<dbReference type="GO" id="GO:0046084">
    <property type="term" value="P:adenine biosynthetic process"/>
    <property type="evidence" value="ECO:0007669"/>
    <property type="project" value="TreeGrafter"/>
</dbReference>
<dbReference type="CDD" id="cd02196">
    <property type="entry name" value="PurM"/>
    <property type="match status" value="1"/>
</dbReference>
<dbReference type="FunFam" id="3.30.1330.10:FF:000001">
    <property type="entry name" value="Phosphoribosylformylglycinamidine cyclo-ligase"/>
    <property type="match status" value="1"/>
</dbReference>
<dbReference type="FunFam" id="3.90.650.10:FF:000011">
    <property type="entry name" value="Phosphoribosylformylglycinamidine cyclo-ligase"/>
    <property type="match status" value="1"/>
</dbReference>
<dbReference type="Gene3D" id="3.90.650.10">
    <property type="entry name" value="PurM-like C-terminal domain"/>
    <property type="match status" value="1"/>
</dbReference>
<dbReference type="Gene3D" id="3.30.1330.10">
    <property type="entry name" value="PurM-like, N-terminal domain"/>
    <property type="match status" value="1"/>
</dbReference>
<dbReference type="HAMAP" id="MF_00741">
    <property type="entry name" value="AIRS"/>
    <property type="match status" value="1"/>
</dbReference>
<dbReference type="InterPro" id="IPR010918">
    <property type="entry name" value="PurM-like_C_dom"/>
</dbReference>
<dbReference type="InterPro" id="IPR036676">
    <property type="entry name" value="PurM-like_C_sf"/>
</dbReference>
<dbReference type="InterPro" id="IPR016188">
    <property type="entry name" value="PurM-like_N"/>
</dbReference>
<dbReference type="InterPro" id="IPR036921">
    <property type="entry name" value="PurM-like_N_sf"/>
</dbReference>
<dbReference type="InterPro" id="IPR004733">
    <property type="entry name" value="PurM_cligase"/>
</dbReference>
<dbReference type="NCBIfam" id="TIGR00878">
    <property type="entry name" value="purM"/>
    <property type="match status" value="1"/>
</dbReference>
<dbReference type="PANTHER" id="PTHR10520:SF12">
    <property type="entry name" value="TRIFUNCTIONAL PURINE BIOSYNTHETIC PROTEIN ADENOSINE-3"/>
    <property type="match status" value="1"/>
</dbReference>
<dbReference type="PANTHER" id="PTHR10520">
    <property type="entry name" value="TRIFUNCTIONAL PURINE BIOSYNTHETIC PROTEIN ADENOSINE-3-RELATED"/>
    <property type="match status" value="1"/>
</dbReference>
<dbReference type="Pfam" id="PF00586">
    <property type="entry name" value="AIRS"/>
    <property type="match status" value="1"/>
</dbReference>
<dbReference type="Pfam" id="PF02769">
    <property type="entry name" value="AIRS_C"/>
    <property type="match status" value="1"/>
</dbReference>
<dbReference type="SUPFAM" id="SSF56042">
    <property type="entry name" value="PurM C-terminal domain-like"/>
    <property type="match status" value="1"/>
</dbReference>
<dbReference type="SUPFAM" id="SSF55326">
    <property type="entry name" value="PurM N-terminal domain-like"/>
    <property type="match status" value="1"/>
</dbReference>
<keyword id="KW-0067">ATP-binding</keyword>
<keyword id="KW-0963">Cytoplasm</keyword>
<keyword id="KW-0436">Ligase</keyword>
<keyword id="KW-0547">Nucleotide-binding</keyword>
<keyword id="KW-0658">Purine biosynthesis</keyword>
<keyword id="KW-1185">Reference proteome</keyword>
<organism>
    <name type="scientific">Methylobacterium nodulans (strain LMG 21967 / CNCM I-2342 / ORS 2060)</name>
    <dbReference type="NCBI Taxonomy" id="460265"/>
    <lineage>
        <taxon>Bacteria</taxon>
        <taxon>Pseudomonadati</taxon>
        <taxon>Pseudomonadota</taxon>
        <taxon>Alphaproteobacteria</taxon>
        <taxon>Hyphomicrobiales</taxon>
        <taxon>Methylobacteriaceae</taxon>
        <taxon>Methylobacterium</taxon>
    </lineage>
</organism>
<proteinExistence type="inferred from homology"/>
<comment type="catalytic activity">
    <reaction evidence="1">
        <text>2-formamido-N(1)-(5-O-phospho-beta-D-ribosyl)acetamidine + ATP = 5-amino-1-(5-phospho-beta-D-ribosyl)imidazole + ADP + phosphate + H(+)</text>
        <dbReference type="Rhea" id="RHEA:23032"/>
        <dbReference type="ChEBI" id="CHEBI:15378"/>
        <dbReference type="ChEBI" id="CHEBI:30616"/>
        <dbReference type="ChEBI" id="CHEBI:43474"/>
        <dbReference type="ChEBI" id="CHEBI:137981"/>
        <dbReference type="ChEBI" id="CHEBI:147287"/>
        <dbReference type="ChEBI" id="CHEBI:456216"/>
        <dbReference type="EC" id="6.3.3.1"/>
    </reaction>
</comment>
<comment type="pathway">
    <text evidence="1">Purine metabolism; IMP biosynthesis via de novo pathway; 5-amino-1-(5-phospho-D-ribosyl)imidazole from N(2)-formyl-N(1)-(5-phospho-D-ribosyl)glycinamide: step 2/2.</text>
</comment>
<comment type="subcellular location">
    <subcellularLocation>
        <location evidence="1">Cytoplasm</location>
    </subcellularLocation>
</comment>
<comment type="similarity">
    <text evidence="1">Belongs to the AIR synthase family.</text>
</comment>